<keyword id="KW-0903">Direct protein sequencing</keyword>
<keyword id="KW-1185">Reference proteome</keyword>
<keyword id="KW-0687">Ribonucleoprotein</keyword>
<keyword id="KW-0689">Ribosomal protein</keyword>
<comment type="similarity">
    <text evidence="1">Belongs to the universal ribosomal protein uL13 family.</text>
</comment>
<sequence length="15" mass="1489">VSGSGIMAKRVVVDA</sequence>
<feature type="chain" id="PRO_0000133786" description="Large ribosomal subunit protein uL13">
    <location>
        <begin position="1"/>
        <end position="15" status="greater than"/>
    </location>
</feature>
<feature type="non-terminal residue">
    <location>
        <position position="15"/>
    </location>
</feature>
<evidence type="ECO:0000305" key="1"/>
<accession>P82454</accession>
<dbReference type="Proteomes" id="UP001155700">
    <property type="component" value="Unplaced"/>
</dbReference>
<dbReference type="GO" id="GO:1990904">
    <property type="term" value="C:ribonucleoprotein complex"/>
    <property type="evidence" value="ECO:0007669"/>
    <property type="project" value="UniProtKB-KW"/>
</dbReference>
<dbReference type="GO" id="GO:0005840">
    <property type="term" value="C:ribosome"/>
    <property type="evidence" value="ECO:0007669"/>
    <property type="project" value="UniProtKB-KW"/>
</dbReference>
<reference key="1">
    <citation type="submission" date="2000-04" db="UniProtKB">
        <title>N-terminal sequence of spinach cytosolic 60S ribosomal protein L13a.</title>
        <authorList>
            <person name="Yamaguchi K."/>
            <person name="Subramanian A.R."/>
        </authorList>
    </citation>
    <scope>PROTEIN SEQUENCE</scope>
    <source>
        <strain>cv. Alwaro</strain>
        <tissue>Leaf</tissue>
    </source>
</reference>
<name>RL13A_SPIOL</name>
<gene>
    <name type="primary">RPL13A</name>
</gene>
<organism>
    <name type="scientific">Spinacia oleracea</name>
    <name type="common">Spinach</name>
    <dbReference type="NCBI Taxonomy" id="3562"/>
    <lineage>
        <taxon>Eukaryota</taxon>
        <taxon>Viridiplantae</taxon>
        <taxon>Streptophyta</taxon>
        <taxon>Embryophyta</taxon>
        <taxon>Tracheophyta</taxon>
        <taxon>Spermatophyta</taxon>
        <taxon>Magnoliopsida</taxon>
        <taxon>eudicotyledons</taxon>
        <taxon>Gunneridae</taxon>
        <taxon>Pentapetalae</taxon>
        <taxon>Caryophyllales</taxon>
        <taxon>Chenopodiaceae</taxon>
        <taxon>Chenopodioideae</taxon>
        <taxon>Anserineae</taxon>
        <taxon>Spinacia</taxon>
    </lineage>
</organism>
<protein>
    <recommendedName>
        <fullName evidence="1">Large ribosomal subunit protein uL13</fullName>
    </recommendedName>
    <alternativeName>
        <fullName>60S ribosomal protein L13a</fullName>
    </alternativeName>
</protein>
<proteinExistence type="evidence at protein level"/>